<dbReference type="EC" id="2.8.1.13" evidence="1"/>
<dbReference type="EMBL" id="CP000511">
    <property type="protein sequence ID" value="ABM12921.1"/>
    <property type="molecule type" value="Genomic_DNA"/>
</dbReference>
<dbReference type="RefSeq" id="WP_011779335.1">
    <property type="nucleotide sequence ID" value="NZ_JACKSD010000243.1"/>
</dbReference>
<dbReference type="SMR" id="A1T6X1"/>
<dbReference type="STRING" id="350058.Mvan_2106"/>
<dbReference type="KEGG" id="mva:Mvan_2106"/>
<dbReference type="eggNOG" id="COG0482">
    <property type="taxonomic scope" value="Bacteria"/>
</dbReference>
<dbReference type="HOGENOM" id="CLU_035188_0_2_11"/>
<dbReference type="Proteomes" id="UP000009159">
    <property type="component" value="Chromosome"/>
</dbReference>
<dbReference type="GO" id="GO:0005737">
    <property type="term" value="C:cytoplasm"/>
    <property type="evidence" value="ECO:0007669"/>
    <property type="project" value="UniProtKB-SubCell"/>
</dbReference>
<dbReference type="GO" id="GO:0005524">
    <property type="term" value="F:ATP binding"/>
    <property type="evidence" value="ECO:0007669"/>
    <property type="project" value="UniProtKB-KW"/>
</dbReference>
<dbReference type="GO" id="GO:0000049">
    <property type="term" value="F:tRNA binding"/>
    <property type="evidence" value="ECO:0007669"/>
    <property type="project" value="UniProtKB-KW"/>
</dbReference>
<dbReference type="GO" id="GO:0103016">
    <property type="term" value="F:tRNA-uridine 2-sulfurtransferase activity"/>
    <property type="evidence" value="ECO:0007669"/>
    <property type="project" value="UniProtKB-EC"/>
</dbReference>
<dbReference type="GO" id="GO:0002143">
    <property type="term" value="P:tRNA wobble position uridine thiolation"/>
    <property type="evidence" value="ECO:0007669"/>
    <property type="project" value="TreeGrafter"/>
</dbReference>
<dbReference type="CDD" id="cd01998">
    <property type="entry name" value="MnmA_TRMU-like"/>
    <property type="match status" value="1"/>
</dbReference>
<dbReference type="FunFam" id="2.30.30.280:FF:000001">
    <property type="entry name" value="tRNA-specific 2-thiouridylase MnmA"/>
    <property type="match status" value="1"/>
</dbReference>
<dbReference type="FunFam" id="3.40.50.620:FF:000057">
    <property type="entry name" value="tRNA-specific 2-thiouridylase MnmA"/>
    <property type="match status" value="1"/>
</dbReference>
<dbReference type="Gene3D" id="2.30.30.280">
    <property type="entry name" value="Adenine nucleotide alpha hydrolases-like domains"/>
    <property type="match status" value="1"/>
</dbReference>
<dbReference type="Gene3D" id="3.40.50.620">
    <property type="entry name" value="HUPs"/>
    <property type="match status" value="1"/>
</dbReference>
<dbReference type="Gene3D" id="2.40.30.10">
    <property type="entry name" value="Translation factors"/>
    <property type="match status" value="1"/>
</dbReference>
<dbReference type="HAMAP" id="MF_00144">
    <property type="entry name" value="tRNA_thiouridyl_MnmA"/>
    <property type="match status" value="1"/>
</dbReference>
<dbReference type="InterPro" id="IPR004506">
    <property type="entry name" value="MnmA-like"/>
</dbReference>
<dbReference type="InterPro" id="IPR046885">
    <property type="entry name" value="MnmA-like_C"/>
</dbReference>
<dbReference type="InterPro" id="IPR046884">
    <property type="entry name" value="MnmA-like_central"/>
</dbReference>
<dbReference type="InterPro" id="IPR023382">
    <property type="entry name" value="MnmA-like_central_sf"/>
</dbReference>
<dbReference type="InterPro" id="IPR014729">
    <property type="entry name" value="Rossmann-like_a/b/a_fold"/>
</dbReference>
<dbReference type="NCBIfam" id="NF001138">
    <property type="entry name" value="PRK00143.1"/>
    <property type="match status" value="1"/>
</dbReference>
<dbReference type="NCBIfam" id="TIGR00420">
    <property type="entry name" value="trmU"/>
    <property type="match status" value="1"/>
</dbReference>
<dbReference type="PANTHER" id="PTHR11933:SF5">
    <property type="entry name" value="MITOCHONDRIAL TRNA-SPECIFIC 2-THIOURIDYLASE 1"/>
    <property type="match status" value="1"/>
</dbReference>
<dbReference type="PANTHER" id="PTHR11933">
    <property type="entry name" value="TRNA 5-METHYLAMINOMETHYL-2-THIOURIDYLATE -METHYLTRANSFERASE"/>
    <property type="match status" value="1"/>
</dbReference>
<dbReference type="Pfam" id="PF03054">
    <property type="entry name" value="tRNA_Me_trans"/>
    <property type="match status" value="1"/>
</dbReference>
<dbReference type="Pfam" id="PF20258">
    <property type="entry name" value="tRNA_Me_trans_C"/>
    <property type="match status" value="1"/>
</dbReference>
<dbReference type="Pfam" id="PF20259">
    <property type="entry name" value="tRNA_Me_trans_M"/>
    <property type="match status" value="1"/>
</dbReference>
<dbReference type="SUPFAM" id="SSF52402">
    <property type="entry name" value="Adenine nucleotide alpha hydrolases-like"/>
    <property type="match status" value="1"/>
</dbReference>
<sequence>MRVLVAMSGGVDSSVAAARMVDAGHDVVGVHLALSSAPGTLRTGSRGCCSKEDAGDARRVADVLGIPFYVWDFADRFKEDVIDDFVESYARGETPNPCVRCNERIKFSALSARALALGFDALATGHYARLTDGRLRRAVDHDKDQSYVLAVLTAEQLRHAVFPIGDTPKPAIREEAARRGLAVADKADSHDICFIPSGDTRAFLGARIGVRRGSVVDATGAVLAEHDGVHGFTIGQRKGLGIPGPGPDGRPRYVTGIDAETGTVHVGDVTDLEVTSLLGEAPVFTSGVAPDAPVECAVQVRAHGGVVDAVAELRDGALEVSLRTPLRGVAPGQTLVLYRSDPDGDEVLGSATISAAR</sequence>
<comment type="function">
    <text evidence="1">Catalyzes the 2-thiolation of uridine at the wobble position (U34) of tRNA, leading to the formation of s(2)U34.</text>
</comment>
<comment type="catalytic activity">
    <reaction evidence="1">
        <text>S-sulfanyl-L-cysteinyl-[protein] + uridine(34) in tRNA + AH2 + ATP = 2-thiouridine(34) in tRNA + L-cysteinyl-[protein] + A + AMP + diphosphate + H(+)</text>
        <dbReference type="Rhea" id="RHEA:47032"/>
        <dbReference type="Rhea" id="RHEA-COMP:10131"/>
        <dbReference type="Rhea" id="RHEA-COMP:11726"/>
        <dbReference type="Rhea" id="RHEA-COMP:11727"/>
        <dbReference type="Rhea" id="RHEA-COMP:11728"/>
        <dbReference type="ChEBI" id="CHEBI:13193"/>
        <dbReference type="ChEBI" id="CHEBI:15378"/>
        <dbReference type="ChEBI" id="CHEBI:17499"/>
        <dbReference type="ChEBI" id="CHEBI:29950"/>
        <dbReference type="ChEBI" id="CHEBI:30616"/>
        <dbReference type="ChEBI" id="CHEBI:33019"/>
        <dbReference type="ChEBI" id="CHEBI:61963"/>
        <dbReference type="ChEBI" id="CHEBI:65315"/>
        <dbReference type="ChEBI" id="CHEBI:87170"/>
        <dbReference type="ChEBI" id="CHEBI:456215"/>
        <dbReference type="EC" id="2.8.1.13"/>
    </reaction>
</comment>
<comment type="subcellular location">
    <subcellularLocation>
        <location evidence="1">Cytoplasm</location>
    </subcellularLocation>
</comment>
<comment type="similarity">
    <text evidence="1">Belongs to the MnmA/TRMU family.</text>
</comment>
<accession>A1T6X1</accession>
<evidence type="ECO:0000255" key="1">
    <source>
        <dbReference type="HAMAP-Rule" id="MF_00144"/>
    </source>
</evidence>
<reference key="1">
    <citation type="submission" date="2006-12" db="EMBL/GenBank/DDBJ databases">
        <title>Complete sequence of Mycobacterium vanbaalenii PYR-1.</title>
        <authorList>
            <consortium name="US DOE Joint Genome Institute"/>
            <person name="Copeland A."/>
            <person name="Lucas S."/>
            <person name="Lapidus A."/>
            <person name="Barry K."/>
            <person name="Detter J.C."/>
            <person name="Glavina del Rio T."/>
            <person name="Hammon N."/>
            <person name="Israni S."/>
            <person name="Dalin E."/>
            <person name="Tice H."/>
            <person name="Pitluck S."/>
            <person name="Singan V."/>
            <person name="Schmutz J."/>
            <person name="Larimer F."/>
            <person name="Land M."/>
            <person name="Hauser L."/>
            <person name="Kyrpides N."/>
            <person name="Anderson I.J."/>
            <person name="Miller C."/>
            <person name="Richardson P."/>
        </authorList>
    </citation>
    <scope>NUCLEOTIDE SEQUENCE [LARGE SCALE GENOMIC DNA]</scope>
    <source>
        <strain>DSM 7251 / JCM 13017 / BCRC 16820 / KCTC 9966 / NRRL B-24157 / PYR-1</strain>
    </source>
</reference>
<proteinExistence type="inferred from homology"/>
<keyword id="KW-0067">ATP-binding</keyword>
<keyword id="KW-0963">Cytoplasm</keyword>
<keyword id="KW-1015">Disulfide bond</keyword>
<keyword id="KW-0547">Nucleotide-binding</keyword>
<keyword id="KW-0694">RNA-binding</keyword>
<keyword id="KW-0808">Transferase</keyword>
<keyword id="KW-0819">tRNA processing</keyword>
<keyword id="KW-0820">tRNA-binding</keyword>
<protein>
    <recommendedName>
        <fullName evidence="1">tRNA-specific 2-thiouridylase MnmA</fullName>
        <ecNumber evidence="1">2.8.1.13</ecNumber>
    </recommendedName>
</protein>
<gene>
    <name evidence="1" type="primary">mnmA</name>
    <name type="synonym">trmU</name>
    <name type="ordered locus">Mvan_2106</name>
</gene>
<organism>
    <name type="scientific">Mycolicibacterium vanbaalenii (strain DSM 7251 / JCM 13017 / BCRC 16820 / KCTC 9966 / NRRL B-24157 / PYR-1)</name>
    <name type="common">Mycobacterium vanbaalenii</name>
    <dbReference type="NCBI Taxonomy" id="350058"/>
    <lineage>
        <taxon>Bacteria</taxon>
        <taxon>Bacillati</taxon>
        <taxon>Actinomycetota</taxon>
        <taxon>Actinomycetes</taxon>
        <taxon>Mycobacteriales</taxon>
        <taxon>Mycobacteriaceae</taxon>
        <taxon>Mycolicibacterium</taxon>
    </lineage>
</organism>
<name>MNMA_MYCVP</name>
<feature type="chain" id="PRO_1000009546" description="tRNA-specific 2-thiouridylase MnmA">
    <location>
        <begin position="1"/>
        <end position="357"/>
    </location>
</feature>
<feature type="region of interest" description="Interaction with tRNA" evidence="1">
    <location>
        <begin position="143"/>
        <end position="145"/>
    </location>
</feature>
<feature type="active site" description="Nucleophile" evidence="1">
    <location>
        <position position="101"/>
    </location>
</feature>
<feature type="active site" description="Cysteine persulfide intermediate" evidence="1">
    <location>
        <position position="193"/>
    </location>
</feature>
<feature type="binding site" evidence="1">
    <location>
        <begin position="6"/>
        <end position="13"/>
    </location>
    <ligand>
        <name>ATP</name>
        <dbReference type="ChEBI" id="CHEBI:30616"/>
    </ligand>
</feature>
<feature type="binding site" evidence="1">
    <location>
        <position position="32"/>
    </location>
    <ligand>
        <name>ATP</name>
        <dbReference type="ChEBI" id="CHEBI:30616"/>
    </ligand>
</feature>
<feature type="binding site" evidence="1">
    <location>
        <position position="125"/>
    </location>
    <ligand>
        <name>ATP</name>
        <dbReference type="ChEBI" id="CHEBI:30616"/>
    </ligand>
</feature>
<feature type="site" description="Interaction with tRNA" evidence="1">
    <location>
        <position position="126"/>
    </location>
</feature>
<feature type="site" description="Interaction with tRNA" evidence="1">
    <location>
        <position position="333"/>
    </location>
</feature>
<feature type="disulfide bond" description="Alternate" evidence="1">
    <location>
        <begin position="101"/>
        <end position="193"/>
    </location>
</feature>